<organism>
    <name type="scientific">Vibrio vulnificus (strain YJ016)</name>
    <dbReference type="NCBI Taxonomy" id="196600"/>
    <lineage>
        <taxon>Bacteria</taxon>
        <taxon>Pseudomonadati</taxon>
        <taxon>Pseudomonadota</taxon>
        <taxon>Gammaproteobacteria</taxon>
        <taxon>Vibrionales</taxon>
        <taxon>Vibrionaceae</taxon>
        <taxon>Vibrio</taxon>
    </lineage>
</organism>
<name>UGPC_VIBVY</name>
<gene>
    <name evidence="1" type="primary">ugpC</name>
    <name type="ordered locus">VV1509</name>
</gene>
<sequence>MLDIQQLVKTYENGHQAVKGVDLAIHQGEFIVLVGPSGCGKSSILRSIAGLEAITSGEIHLAGRRVDNEKPANRDIAMVFQNYALYPHMSVYDNLAYGLKNRGVSKATIAEKIAKVAKTLKIEEYLDRKPAKLSGGQRQRVAMGRAIVRDPQLFLFDEPLSNLDAALRAHMRLEIKKLQRELGVTSVYVTHDQVEAMTLADRIVVLKQGEIEQIGTPAEVYHQPASTFVASFIGSPAMNFLAASISDGKLQLAGKQWSVPYDANLNCNTLTLGIRPEHASLHPVDDAIELSLNIQVVEPLGPNQLVHGKINGEYGDEDFIAVTAEMPLTIGDNLPIWVRVEQLHLFDEQEKRIPISAQSPSVDTHQQQRQQQ</sequence>
<feature type="chain" id="PRO_0000289788" description="sn-glycerol-3-phosphate import ATP-binding protein UgpC">
    <location>
        <begin position="1"/>
        <end position="372"/>
    </location>
</feature>
<feature type="domain" description="ABC transporter" evidence="1">
    <location>
        <begin position="2"/>
        <end position="233"/>
    </location>
</feature>
<feature type="binding site" evidence="1">
    <location>
        <begin position="35"/>
        <end position="42"/>
    </location>
    <ligand>
        <name>ATP</name>
        <dbReference type="ChEBI" id="CHEBI:30616"/>
    </ligand>
</feature>
<proteinExistence type="inferred from homology"/>
<evidence type="ECO:0000255" key="1">
    <source>
        <dbReference type="HAMAP-Rule" id="MF_01727"/>
    </source>
</evidence>
<evidence type="ECO:0000305" key="2"/>
<comment type="function">
    <text evidence="1">Part of the ABC transporter complex UgpBAEC involved in sn-glycerol-3-phosphate (G3P) import. Responsible for energy coupling to the transport system.</text>
</comment>
<comment type="catalytic activity">
    <reaction evidence="1">
        <text>sn-glycerol 3-phosphate(out) + ATP + H2O = sn-glycerol 3-phosphate(in) + ADP + phosphate + H(+)</text>
        <dbReference type="Rhea" id="RHEA:21668"/>
        <dbReference type="ChEBI" id="CHEBI:15377"/>
        <dbReference type="ChEBI" id="CHEBI:15378"/>
        <dbReference type="ChEBI" id="CHEBI:30616"/>
        <dbReference type="ChEBI" id="CHEBI:43474"/>
        <dbReference type="ChEBI" id="CHEBI:57597"/>
        <dbReference type="ChEBI" id="CHEBI:456216"/>
        <dbReference type="EC" id="7.6.2.10"/>
    </reaction>
</comment>
<comment type="subunit">
    <text evidence="1">The complex is composed of two ATP-binding proteins (UgpC), two transmembrane proteins (UgpA and UgpE) and a solute-binding protein (UgpB).</text>
</comment>
<comment type="subcellular location">
    <subcellularLocation>
        <location evidence="1">Cell inner membrane</location>
        <topology evidence="1">Peripheral membrane protein</topology>
    </subcellularLocation>
</comment>
<comment type="similarity">
    <text evidence="1">Belongs to the ABC transporter superfamily. sn-glycerol-3-phosphate importer (TC 3.A.1.1.3) family.</text>
</comment>
<comment type="sequence caution" evidence="2">
    <conflict type="erroneous initiation">
        <sequence resource="EMBL-CDS" id="BAC94273"/>
    </conflict>
</comment>
<keyword id="KW-0067">ATP-binding</keyword>
<keyword id="KW-0997">Cell inner membrane</keyword>
<keyword id="KW-1003">Cell membrane</keyword>
<keyword id="KW-0472">Membrane</keyword>
<keyword id="KW-0547">Nucleotide-binding</keyword>
<keyword id="KW-0762">Sugar transport</keyword>
<keyword id="KW-1278">Translocase</keyword>
<keyword id="KW-0813">Transport</keyword>
<protein>
    <recommendedName>
        <fullName evidence="1">sn-glycerol-3-phosphate import ATP-binding protein UgpC</fullName>
        <ecNumber evidence="1">7.6.2.10</ecNumber>
    </recommendedName>
</protein>
<reference key="1">
    <citation type="journal article" date="2003" name="Genome Res.">
        <title>Comparative genome analysis of Vibrio vulnificus, a marine pathogen.</title>
        <authorList>
            <person name="Chen C.-Y."/>
            <person name="Wu K.-M."/>
            <person name="Chang Y.-C."/>
            <person name="Chang C.-H."/>
            <person name="Tsai H.-C."/>
            <person name="Liao T.-L."/>
            <person name="Liu Y.-M."/>
            <person name="Chen H.-J."/>
            <person name="Shen A.B.-T."/>
            <person name="Li J.-C."/>
            <person name="Su T.-L."/>
            <person name="Shao C.-P."/>
            <person name="Lee C.-T."/>
            <person name="Hor L.-I."/>
            <person name="Tsai S.-F."/>
        </authorList>
    </citation>
    <scope>NUCLEOTIDE SEQUENCE [LARGE SCALE GENOMIC DNA]</scope>
    <source>
        <strain>YJ016</strain>
    </source>
</reference>
<accession>Q7MLB8</accession>
<dbReference type="EC" id="7.6.2.10" evidence="1"/>
<dbReference type="EMBL" id="BA000037">
    <property type="protein sequence ID" value="BAC94273.1"/>
    <property type="status" value="ALT_INIT"/>
    <property type="molecule type" value="Genomic_DNA"/>
</dbReference>
<dbReference type="RefSeq" id="WP_011150141.1">
    <property type="nucleotide sequence ID" value="NC_005139.1"/>
</dbReference>
<dbReference type="SMR" id="Q7MLB8"/>
<dbReference type="STRING" id="672.VV93_v1c14170"/>
<dbReference type="KEGG" id="vvy:VV1509"/>
<dbReference type="eggNOG" id="COG3842">
    <property type="taxonomic scope" value="Bacteria"/>
</dbReference>
<dbReference type="HOGENOM" id="CLU_000604_1_1_6"/>
<dbReference type="Proteomes" id="UP000002675">
    <property type="component" value="Chromosome I"/>
</dbReference>
<dbReference type="GO" id="GO:0055052">
    <property type="term" value="C:ATP-binding cassette (ABC) transporter complex, substrate-binding subunit-containing"/>
    <property type="evidence" value="ECO:0007669"/>
    <property type="project" value="TreeGrafter"/>
</dbReference>
<dbReference type="GO" id="GO:0015430">
    <property type="term" value="F:ABC-type glycerol-3-phosphate transporter activity"/>
    <property type="evidence" value="ECO:0007669"/>
    <property type="project" value="UniProtKB-EC"/>
</dbReference>
<dbReference type="GO" id="GO:0005524">
    <property type="term" value="F:ATP binding"/>
    <property type="evidence" value="ECO:0007669"/>
    <property type="project" value="UniProtKB-KW"/>
</dbReference>
<dbReference type="GO" id="GO:0016887">
    <property type="term" value="F:ATP hydrolysis activity"/>
    <property type="evidence" value="ECO:0007669"/>
    <property type="project" value="InterPro"/>
</dbReference>
<dbReference type="GO" id="GO:0008643">
    <property type="term" value="P:carbohydrate transport"/>
    <property type="evidence" value="ECO:0007669"/>
    <property type="project" value="InterPro"/>
</dbReference>
<dbReference type="GO" id="GO:0001407">
    <property type="term" value="P:glycerophosphodiester transmembrane transport"/>
    <property type="evidence" value="ECO:0007669"/>
    <property type="project" value="TreeGrafter"/>
</dbReference>
<dbReference type="CDD" id="cd03301">
    <property type="entry name" value="ABC_MalK_N"/>
    <property type="match status" value="1"/>
</dbReference>
<dbReference type="FunFam" id="3.40.50.300:FF:000042">
    <property type="entry name" value="Maltose/maltodextrin ABC transporter, ATP-binding protein"/>
    <property type="match status" value="1"/>
</dbReference>
<dbReference type="Gene3D" id="2.40.50.100">
    <property type="match status" value="1"/>
</dbReference>
<dbReference type="Gene3D" id="2.40.50.140">
    <property type="entry name" value="Nucleic acid-binding proteins"/>
    <property type="match status" value="1"/>
</dbReference>
<dbReference type="Gene3D" id="3.40.50.300">
    <property type="entry name" value="P-loop containing nucleotide triphosphate hydrolases"/>
    <property type="match status" value="1"/>
</dbReference>
<dbReference type="InterPro" id="IPR003593">
    <property type="entry name" value="AAA+_ATPase"/>
</dbReference>
<dbReference type="InterPro" id="IPR003439">
    <property type="entry name" value="ABC_transporter-like_ATP-bd"/>
</dbReference>
<dbReference type="InterPro" id="IPR017871">
    <property type="entry name" value="ABC_transporter-like_CS"/>
</dbReference>
<dbReference type="InterPro" id="IPR015855">
    <property type="entry name" value="ABC_transpr_MalK-like"/>
</dbReference>
<dbReference type="InterPro" id="IPR047641">
    <property type="entry name" value="ABC_transpr_MalK/UgpC-like"/>
</dbReference>
<dbReference type="InterPro" id="IPR008995">
    <property type="entry name" value="Mo/tungstate-bd_C_term_dom"/>
</dbReference>
<dbReference type="InterPro" id="IPR012340">
    <property type="entry name" value="NA-bd_OB-fold"/>
</dbReference>
<dbReference type="InterPro" id="IPR040582">
    <property type="entry name" value="OB_MalK-like"/>
</dbReference>
<dbReference type="InterPro" id="IPR027417">
    <property type="entry name" value="P-loop_NTPase"/>
</dbReference>
<dbReference type="NCBIfam" id="NF008653">
    <property type="entry name" value="PRK11650.1"/>
    <property type="match status" value="1"/>
</dbReference>
<dbReference type="PANTHER" id="PTHR43875">
    <property type="entry name" value="MALTODEXTRIN IMPORT ATP-BINDING PROTEIN MSMX"/>
    <property type="match status" value="1"/>
</dbReference>
<dbReference type="PANTHER" id="PTHR43875:SF12">
    <property type="entry name" value="SN-GLYCEROL-3-PHOSPHATE IMPORT ATP-BINDING PROTEIN UGPC"/>
    <property type="match status" value="1"/>
</dbReference>
<dbReference type="Pfam" id="PF00005">
    <property type="entry name" value="ABC_tran"/>
    <property type="match status" value="1"/>
</dbReference>
<dbReference type="Pfam" id="PF17912">
    <property type="entry name" value="OB_MalK"/>
    <property type="match status" value="1"/>
</dbReference>
<dbReference type="SMART" id="SM00382">
    <property type="entry name" value="AAA"/>
    <property type="match status" value="1"/>
</dbReference>
<dbReference type="SUPFAM" id="SSF50331">
    <property type="entry name" value="MOP-like"/>
    <property type="match status" value="1"/>
</dbReference>
<dbReference type="SUPFAM" id="SSF52540">
    <property type="entry name" value="P-loop containing nucleoside triphosphate hydrolases"/>
    <property type="match status" value="1"/>
</dbReference>
<dbReference type="PROSITE" id="PS00211">
    <property type="entry name" value="ABC_TRANSPORTER_1"/>
    <property type="match status" value="1"/>
</dbReference>
<dbReference type="PROSITE" id="PS50893">
    <property type="entry name" value="ABC_TRANSPORTER_2"/>
    <property type="match status" value="1"/>
</dbReference>
<dbReference type="PROSITE" id="PS51315">
    <property type="entry name" value="UGPC"/>
    <property type="match status" value="1"/>
</dbReference>